<organism>
    <name type="scientific">Thermotoga neapolitana (strain ATCC 49049 / DSM 4359 / NBRC 107923 / NS-E)</name>
    <dbReference type="NCBI Taxonomy" id="309803"/>
    <lineage>
        <taxon>Bacteria</taxon>
        <taxon>Thermotogati</taxon>
        <taxon>Thermotogota</taxon>
        <taxon>Thermotogae</taxon>
        <taxon>Thermotogales</taxon>
        <taxon>Thermotogaceae</taxon>
        <taxon>Thermotoga</taxon>
    </lineage>
</organism>
<comment type="function">
    <text evidence="1">Involved in protein export. Acts as a chaperone by maintaining the newly synthesized protein in an open conformation. Functions as a peptidyl-prolyl cis-trans isomerase.</text>
</comment>
<comment type="catalytic activity">
    <reaction evidence="1">
        <text>[protein]-peptidylproline (omega=180) = [protein]-peptidylproline (omega=0)</text>
        <dbReference type="Rhea" id="RHEA:16237"/>
        <dbReference type="Rhea" id="RHEA-COMP:10747"/>
        <dbReference type="Rhea" id="RHEA-COMP:10748"/>
        <dbReference type="ChEBI" id="CHEBI:83833"/>
        <dbReference type="ChEBI" id="CHEBI:83834"/>
        <dbReference type="EC" id="5.2.1.8"/>
    </reaction>
</comment>
<comment type="subcellular location">
    <subcellularLocation>
        <location>Cytoplasm</location>
    </subcellularLocation>
    <text evidence="1">About half TF is bound to the ribosome near the polypeptide exit tunnel while the other half is free in the cytoplasm.</text>
</comment>
<comment type="domain">
    <text evidence="1">Consists of 3 domains; the N-terminus binds the ribosome, the middle domain has PPIase activity, while the C-terminus has intrinsic chaperone activity on its own.</text>
</comment>
<comment type="similarity">
    <text evidence="1">Belongs to the FKBP-type PPIase family. Tig subfamily.</text>
</comment>
<evidence type="ECO:0000255" key="1">
    <source>
        <dbReference type="HAMAP-Rule" id="MF_00303"/>
    </source>
</evidence>
<sequence>MEVKELERDKNRVVLEYVFNREEVLEAEDKAARYLNQRVEIPGFRKGRVPKNILKMRLGEDFQEYTLDFLMDLIPDTLKDRNLIMSPVVTEREIKEDTARFVVEVHEEPEVKIGDVSKIEVEKVDEEKVLEKYVERRLEDLREKHALLEPKEGPAEVGDLVRISMEVYNEEGKNLTTREYEYVIKEGEDRPFVKDLIGKKKDDVVEIEREYEGKKYTYRLKVQEVYRRTLPEIGDELARTVNNEFETLEQLKEELKKEGKDIYDVEMKESMREQLLEKLPEVVEIEISERTLDLLVQETINRLKREGRYDQIVSSYESEEKLKEELKKRILDDIKRDRAIEVIAKERNVDVSDEELEKEAEELAPFWGISPERAKSLVKSRRDLREDLRWAILKRKVLDLLLEEVTVKVVEPRGEGDGDERKGDN</sequence>
<reference key="1">
    <citation type="submission" date="2007-11" db="EMBL/GenBank/DDBJ databases">
        <title>The genome sequence of the hyperthermophilic bacterium Thermotoga neapolitana.</title>
        <authorList>
            <person name="Lim S.K."/>
            <person name="Kim J.S."/>
            <person name="Cha S.H."/>
            <person name="Park B.C."/>
            <person name="Lee D.S."/>
            <person name="Tae H.S."/>
            <person name="Kim S.-J."/>
            <person name="Kim J.J."/>
            <person name="Park K.J."/>
            <person name="Lee S.Y."/>
        </authorList>
    </citation>
    <scope>NUCLEOTIDE SEQUENCE [LARGE SCALE GENOMIC DNA]</scope>
    <source>
        <strain>ATCC 49049 / DSM 4359 / NBRC 107923 / NS-E</strain>
    </source>
</reference>
<keyword id="KW-0131">Cell cycle</keyword>
<keyword id="KW-0132">Cell division</keyword>
<keyword id="KW-0143">Chaperone</keyword>
<keyword id="KW-0963">Cytoplasm</keyword>
<keyword id="KW-0413">Isomerase</keyword>
<keyword id="KW-0697">Rotamase</keyword>
<gene>
    <name evidence="1" type="primary">tig</name>
    <name type="ordered locus">CTN_1891</name>
</gene>
<accession>B9KAT4</accession>
<name>TIG_THENN</name>
<proteinExistence type="inferred from homology"/>
<dbReference type="EC" id="5.2.1.8" evidence="1"/>
<dbReference type="EMBL" id="CP000916">
    <property type="protein sequence ID" value="ACM24067.1"/>
    <property type="molecule type" value="Genomic_DNA"/>
</dbReference>
<dbReference type="RefSeq" id="WP_015920303.1">
    <property type="nucleotide sequence ID" value="NC_011978.1"/>
</dbReference>
<dbReference type="SMR" id="B9KAT4"/>
<dbReference type="STRING" id="309803.CTN_1891"/>
<dbReference type="KEGG" id="tna:CTN_1891"/>
<dbReference type="eggNOG" id="COG0544">
    <property type="taxonomic scope" value="Bacteria"/>
</dbReference>
<dbReference type="HOGENOM" id="CLU_033058_3_1_0"/>
<dbReference type="Proteomes" id="UP000000445">
    <property type="component" value="Chromosome"/>
</dbReference>
<dbReference type="GO" id="GO:0005737">
    <property type="term" value="C:cytoplasm"/>
    <property type="evidence" value="ECO:0007669"/>
    <property type="project" value="UniProtKB-SubCell"/>
</dbReference>
<dbReference type="GO" id="GO:0003677">
    <property type="term" value="F:DNA binding"/>
    <property type="evidence" value="ECO:0007669"/>
    <property type="project" value="InterPro"/>
</dbReference>
<dbReference type="GO" id="GO:0003755">
    <property type="term" value="F:peptidyl-prolyl cis-trans isomerase activity"/>
    <property type="evidence" value="ECO:0007669"/>
    <property type="project" value="UniProtKB-UniRule"/>
</dbReference>
<dbReference type="GO" id="GO:0051301">
    <property type="term" value="P:cell division"/>
    <property type="evidence" value="ECO:0007669"/>
    <property type="project" value="UniProtKB-KW"/>
</dbReference>
<dbReference type="GO" id="GO:0006457">
    <property type="term" value="P:protein folding"/>
    <property type="evidence" value="ECO:0007669"/>
    <property type="project" value="UniProtKB-UniRule"/>
</dbReference>
<dbReference type="GO" id="GO:0015031">
    <property type="term" value="P:protein transport"/>
    <property type="evidence" value="ECO:0007669"/>
    <property type="project" value="UniProtKB-UniRule"/>
</dbReference>
<dbReference type="GO" id="GO:0032784">
    <property type="term" value="P:regulation of DNA-templated transcription elongation"/>
    <property type="evidence" value="ECO:0007669"/>
    <property type="project" value="InterPro"/>
</dbReference>
<dbReference type="Gene3D" id="3.10.50.30">
    <property type="entry name" value="Transcription elongation factor, GreA/GreB, C-terminal domain"/>
    <property type="match status" value="1"/>
</dbReference>
<dbReference type="Gene3D" id="3.30.70.1050">
    <property type="entry name" value="Trigger factor ribosome-binding domain"/>
    <property type="match status" value="1"/>
</dbReference>
<dbReference type="Gene3D" id="1.10.3120.10">
    <property type="entry name" value="Trigger factor, C-terminal domain"/>
    <property type="match status" value="1"/>
</dbReference>
<dbReference type="HAMAP" id="MF_00303">
    <property type="entry name" value="Trigger_factor_Tig"/>
    <property type="match status" value="1"/>
</dbReference>
<dbReference type="InterPro" id="IPR036953">
    <property type="entry name" value="GreA/GreB_C_sf"/>
</dbReference>
<dbReference type="InterPro" id="IPR005215">
    <property type="entry name" value="Trig_fac"/>
</dbReference>
<dbReference type="InterPro" id="IPR008880">
    <property type="entry name" value="Trigger_fac_C"/>
</dbReference>
<dbReference type="InterPro" id="IPR037041">
    <property type="entry name" value="Trigger_fac_C_sf"/>
</dbReference>
<dbReference type="InterPro" id="IPR008881">
    <property type="entry name" value="Trigger_fac_ribosome-bd_bac"/>
</dbReference>
<dbReference type="InterPro" id="IPR036611">
    <property type="entry name" value="Trigger_fac_ribosome-bd_sf"/>
</dbReference>
<dbReference type="InterPro" id="IPR027304">
    <property type="entry name" value="Trigger_fact/SurA_dom_sf"/>
</dbReference>
<dbReference type="NCBIfam" id="TIGR00115">
    <property type="entry name" value="tig"/>
    <property type="match status" value="1"/>
</dbReference>
<dbReference type="Pfam" id="PF05698">
    <property type="entry name" value="Trigger_C"/>
    <property type="match status" value="1"/>
</dbReference>
<dbReference type="Pfam" id="PF05697">
    <property type="entry name" value="Trigger_N"/>
    <property type="match status" value="1"/>
</dbReference>
<dbReference type="PIRSF" id="PIRSF003095">
    <property type="entry name" value="Trigger_factor"/>
    <property type="match status" value="1"/>
</dbReference>
<dbReference type="SUPFAM" id="SSF54534">
    <property type="entry name" value="FKBP-like"/>
    <property type="match status" value="1"/>
</dbReference>
<dbReference type="SUPFAM" id="SSF109998">
    <property type="entry name" value="Triger factor/SurA peptide-binding domain-like"/>
    <property type="match status" value="1"/>
</dbReference>
<dbReference type="SUPFAM" id="SSF102735">
    <property type="entry name" value="Trigger factor ribosome-binding domain"/>
    <property type="match status" value="1"/>
</dbReference>
<feature type="chain" id="PRO_1000198185" description="Trigger factor">
    <location>
        <begin position="1"/>
        <end position="425"/>
    </location>
</feature>
<feature type="domain" description="PPIase FKBP-type" evidence="1">
    <location>
        <begin position="158"/>
        <end position="231"/>
    </location>
</feature>
<protein>
    <recommendedName>
        <fullName evidence="1">Trigger factor</fullName>
        <shortName evidence="1">TF</shortName>
        <ecNumber evidence="1">5.2.1.8</ecNumber>
    </recommendedName>
    <alternativeName>
        <fullName evidence="1">PPIase</fullName>
    </alternativeName>
</protein>